<evidence type="ECO:0000250" key="1"/>
<evidence type="ECO:0000250" key="2">
    <source>
        <dbReference type="UniProtKB" id="O60635"/>
    </source>
</evidence>
<evidence type="ECO:0000250" key="3">
    <source>
        <dbReference type="UniProtKB" id="Q6AYR9"/>
    </source>
</evidence>
<evidence type="ECO:0000255" key="4"/>
<evidence type="ECO:0000305" key="5"/>
<reference key="1">
    <citation type="submission" date="2004-11" db="EMBL/GenBank/DDBJ databases">
        <authorList>
            <consortium name="The German cDNA consortium"/>
        </authorList>
    </citation>
    <scope>NUCLEOTIDE SEQUENCE [LARGE SCALE MRNA]</scope>
    <source>
        <tissue>Kidney</tissue>
    </source>
</reference>
<comment type="function">
    <text evidence="2 3">Structural component of specialized membrane microdomains known as tetraspanin-enriched microdomains (TERMs), which act as platforms for receptor clustering and signaling. Participates thereby in diverse biological functions such as cell signal transduction, adhesion, migration and protein trafficking (By similarity). Regulates neuronal differentiation in response to NGF by facilitating NGF-mediated activation of NTRK1/TRKA receptor tyrosine kinase and subsequent downstream signaling pathways (By similarity). Plays a role in the inhibition of TNFalpha-induced apoptosis. Mechanistically, inhibits the NF-kappa-B signaling pathway by blocking phosphorylation of CHUK. Also promotes the stability of the thiamine transporter 1/SLC19A2 in intestinal epithelial cells leading to an increase of thiamine uptake process (By similarity).</text>
</comment>
<comment type="subunit">
    <text evidence="2 3">Interacts with SLC19A2 (By similarity). Interacts with NTRK1/TRKA (By similarity).</text>
</comment>
<comment type="subcellular location">
    <subcellularLocation>
        <location evidence="1">Lysosome membrane</location>
        <topology evidence="1">Multi-pass membrane protein</topology>
    </subcellularLocation>
</comment>
<comment type="similarity">
    <text evidence="5">Belongs to the tetraspanin (TM4SF) family.</text>
</comment>
<gene>
    <name type="primary">TSPAN1</name>
</gene>
<accession>Q5RC27</accession>
<organism>
    <name type="scientific">Pongo abelii</name>
    <name type="common">Sumatran orangutan</name>
    <name type="synonym">Pongo pygmaeus abelii</name>
    <dbReference type="NCBI Taxonomy" id="9601"/>
    <lineage>
        <taxon>Eukaryota</taxon>
        <taxon>Metazoa</taxon>
        <taxon>Chordata</taxon>
        <taxon>Craniata</taxon>
        <taxon>Vertebrata</taxon>
        <taxon>Euteleostomi</taxon>
        <taxon>Mammalia</taxon>
        <taxon>Eutheria</taxon>
        <taxon>Euarchontoglires</taxon>
        <taxon>Primates</taxon>
        <taxon>Haplorrhini</taxon>
        <taxon>Catarrhini</taxon>
        <taxon>Hominidae</taxon>
        <taxon>Pongo</taxon>
    </lineage>
</organism>
<protein>
    <recommendedName>
        <fullName>Tetraspanin-1</fullName>
        <shortName>Tspan-1</shortName>
    </recommendedName>
</protein>
<feature type="chain" id="PRO_0000219235" description="Tetraspanin-1">
    <location>
        <begin position="1"/>
        <end position="241"/>
    </location>
</feature>
<feature type="topological domain" description="Cytoplasmic" evidence="4">
    <location>
        <begin position="1"/>
        <end position="11"/>
    </location>
</feature>
<feature type="transmembrane region" description="Helical" evidence="4">
    <location>
        <begin position="12"/>
        <end position="34"/>
    </location>
</feature>
<feature type="topological domain" description="Extracellular" evidence="4">
    <location>
        <begin position="35"/>
        <end position="53"/>
    </location>
</feature>
<feature type="transmembrane region" description="Helical" evidence="4">
    <location>
        <begin position="54"/>
        <end position="76"/>
    </location>
</feature>
<feature type="topological domain" description="Cytoplasmic" evidence="4">
    <location>
        <begin position="77"/>
        <end position="88"/>
    </location>
</feature>
<feature type="transmembrane region" description="Helical" evidence="4">
    <location>
        <begin position="89"/>
        <end position="111"/>
    </location>
</feature>
<feature type="topological domain" description="Extracellular" evidence="4">
    <location>
        <begin position="112"/>
        <end position="214"/>
    </location>
</feature>
<feature type="transmembrane region" description="Helical" evidence="4">
    <location>
        <begin position="215"/>
        <end position="237"/>
    </location>
</feature>
<feature type="topological domain" description="Cytoplasmic" evidence="4">
    <location>
        <begin position="238"/>
        <end position="241"/>
    </location>
</feature>
<feature type="glycosylation site" description="N-linked (GlcNAc...) asparagine" evidence="4">
    <location>
        <position position="141"/>
    </location>
</feature>
<feature type="glycosylation site" description="N-linked (GlcNAc...) asparagine" evidence="4">
    <location>
        <position position="154"/>
    </location>
</feature>
<feature type="glycosylation site" description="N-linked (GlcNAc...) asparagine" evidence="4">
    <location>
        <position position="178"/>
    </location>
</feature>
<feature type="glycosylation site" description="N-linked (GlcNAc...) asparagine" evidence="4">
    <location>
        <position position="184"/>
    </location>
</feature>
<sequence length="241" mass="26341">MQCFSFIKTMMILFNLLIFLCGAALLAVGIWVSIDGASFLKIFGPLSSSAMQFVNVGYFLIAAGVVVFALGFLGCYGAKTESKCALMTFFFILLLIFIAEVAAAVVALVYTTMAEHFLTLLVVPAIKKDYGSQEDFTQVWNTTMKGLKCCGFTNYTDFEDSPYLKENHAFPPFCCNDNITNTANDTCTKQKAEDQKVEGCFNQLLYDIRTNAVTVGGVAAGIGGLELAAMIVSMYLYCNLQ</sequence>
<dbReference type="EMBL" id="CR858455">
    <property type="protein sequence ID" value="CAH90683.1"/>
    <property type="molecule type" value="mRNA"/>
</dbReference>
<dbReference type="RefSeq" id="NP_001125374.1">
    <property type="nucleotide sequence ID" value="NM_001131902.1"/>
</dbReference>
<dbReference type="RefSeq" id="XP_009249003.1">
    <property type="nucleotide sequence ID" value="XM_009250728.3"/>
</dbReference>
<dbReference type="RefSeq" id="XP_054413064.1">
    <property type="nucleotide sequence ID" value="XM_054557089.2"/>
</dbReference>
<dbReference type="RefSeq" id="XP_054413140.1">
    <property type="nucleotide sequence ID" value="XM_054557165.1"/>
</dbReference>
<dbReference type="RefSeq" id="XP_054413171.1">
    <property type="nucleotide sequence ID" value="XM_054557196.1"/>
</dbReference>
<dbReference type="RefSeq" id="XP_054413208.1">
    <property type="nucleotide sequence ID" value="XM_054557233.1"/>
</dbReference>
<dbReference type="SMR" id="Q5RC27"/>
<dbReference type="FunCoup" id="Q5RC27">
    <property type="interactions" value="119"/>
</dbReference>
<dbReference type="STRING" id="9601.ENSPPYP00000001626"/>
<dbReference type="GlyCosmos" id="Q5RC27">
    <property type="glycosylation" value="4 sites, No reported glycans"/>
</dbReference>
<dbReference type="Ensembl" id="ENSPPYT00000001681.2">
    <property type="protein sequence ID" value="ENSPPYP00000001626.1"/>
    <property type="gene ID" value="ENSPPYG00000001401.2"/>
</dbReference>
<dbReference type="GeneID" id="100172277"/>
<dbReference type="KEGG" id="pon:100172277"/>
<dbReference type="CTD" id="10103"/>
<dbReference type="eggNOG" id="KOG3882">
    <property type="taxonomic scope" value="Eukaryota"/>
</dbReference>
<dbReference type="GeneTree" id="ENSGT00940000158851"/>
<dbReference type="HOGENOM" id="CLU_055524_4_1_1"/>
<dbReference type="InParanoid" id="Q5RC27"/>
<dbReference type="OMA" id="CYGAHTE"/>
<dbReference type="OrthoDB" id="6134317at2759"/>
<dbReference type="TreeFam" id="TF352892"/>
<dbReference type="Proteomes" id="UP000001595">
    <property type="component" value="Chromosome 1"/>
</dbReference>
<dbReference type="GO" id="GO:0030054">
    <property type="term" value="C:cell junction"/>
    <property type="evidence" value="ECO:0007669"/>
    <property type="project" value="Ensembl"/>
</dbReference>
<dbReference type="GO" id="GO:0005765">
    <property type="term" value="C:lysosomal membrane"/>
    <property type="evidence" value="ECO:0007669"/>
    <property type="project" value="UniProtKB-SubCell"/>
</dbReference>
<dbReference type="GO" id="GO:0005654">
    <property type="term" value="C:nucleoplasm"/>
    <property type="evidence" value="ECO:0007669"/>
    <property type="project" value="Ensembl"/>
</dbReference>
<dbReference type="GO" id="GO:0048471">
    <property type="term" value="C:perinuclear region of cytoplasm"/>
    <property type="evidence" value="ECO:0007669"/>
    <property type="project" value="Ensembl"/>
</dbReference>
<dbReference type="GO" id="GO:0005886">
    <property type="term" value="C:plasma membrane"/>
    <property type="evidence" value="ECO:0007669"/>
    <property type="project" value="Ensembl"/>
</dbReference>
<dbReference type="GO" id="GO:0031982">
    <property type="term" value="C:vesicle"/>
    <property type="evidence" value="ECO:0007669"/>
    <property type="project" value="Ensembl"/>
</dbReference>
<dbReference type="GO" id="GO:0050821">
    <property type="term" value="P:protein stabilization"/>
    <property type="evidence" value="ECO:0007669"/>
    <property type="project" value="Ensembl"/>
</dbReference>
<dbReference type="CDD" id="cd03156">
    <property type="entry name" value="uroplakin_I_like_LEL"/>
    <property type="match status" value="1"/>
</dbReference>
<dbReference type="FunFam" id="1.10.1450.10:FF:000020">
    <property type="entry name" value="Tetraspanin"/>
    <property type="match status" value="1"/>
</dbReference>
<dbReference type="Gene3D" id="1.10.1450.10">
    <property type="entry name" value="Tetraspanin"/>
    <property type="match status" value="1"/>
</dbReference>
<dbReference type="InterPro" id="IPR018499">
    <property type="entry name" value="Tetraspanin/Peripherin"/>
</dbReference>
<dbReference type="InterPro" id="IPR000301">
    <property type="entry name" value="Tetraspanin_animals"/>
</dbReference>
<dbReference type="InterPro" id="IPR018503">
    <property type="entry name" value="Tetraspanin_CS"/>
</dbReference>
<dbReference type="InterPro" id="IPR008952">
    <property type="entry name" value="Tetraspanin_EC2_sf"/>
</dbReference>
<dbReference type="PANTHER" id="PTHR19282">
    <property type="entry name" value="TETRASPANIN"/>
    <property type="match status" value="1"/>
</dbReference>
<dbReference type="PANTHER" id="PTHR19282:SF216">
    <property type="entry name" value="TETRASPANIN-1"/>
    <property type="match status" value="1"/>
</dbReference>
<dbReference type="Pfam" id="PF00335">
    <property type="entry name" value="Tetraspanin"/>
    <property type="match status" value="1"/>
</dbReference>
<dbReference type="PIRSF" id="PIRSF002419">
    <property type="entry name" value="Tetraspanin"/>
    <property type="match status" value="1"/>
</dbReference>
<dbReference type="PRINTS" id="PR00259">
    <property type="entry name" value="TMFOUR"/>
</dbReference>
<dbReference type="SUPFAM" id="SSF48652">
    <property type="entry name" value="Tetraspanin"/>
    <property type="match status" value="1"/>
</dbReference>
<dbReference type="PROSITE" id="PS00421">
    <property type="entry name" value="TM4_1"/>
    <property type="match status" value="1"/>
</dbReference>
<proteinExistence type="evidence at transcript level"/>
<name>TSN1_PONAB</name>
<keyword id="KW-0325">Glycoprotein</keyword>
<keyword id="KW-0458">Lysosome</keyword>
<keyword id="KW-0472">Membrane</keyword>
<keyword id="KW-1185">Reference proteome</keyword>
<keyword id="KW-0812">Transmembrane</keyword>
<keyword id="KW-1133">Transmembrane helix</keyword>